<keyword id="KW-0378">Hydrolase</keyword>
<keyword id="KW-0464">Manganese</keyword>
<organism>
    <name type="scientific">Listeria monocytogenes serotype 4b (strain F2365)</name>
    <dbReference type="NCBI Taxonomy" id="265669"/>
    <lineage>
        <taxon>Bacteria</taxon>
        <taxon>Bacillati</taxon>
        <taxon>Bacillota</taxon>
        <taxon>Bacilli</taxon>
        <taxon>Bacillales</taxon>
        <taxon>Listeriaceae</taxon>
        <taxon>Listeria</taxon>
    </lineage>
</organism>
<reference key="1">
    <citation type="journal article" date="2004" name="Nucleic Acids Res.">
        <title>Whole genome comparisons of serotype 4b and 1/2a strains of the food-borne pathogen Listeria monocytogenes reveal new insights into the core genome components of this species.</title>
        <authorList>
            <person name="Nelson K.E."/>
            <person name="Fouts D.E."/>
            <person name="Mongodin E.F."/>
            <person name="Ravel J."/>
            <person name="DeBoy R.T."/>
            <person name="Kolonay J.F."/>
            <person name="Rasko D.A."/>
            <person name="Angiuoli S.V."/>
            <person name="Gill S.R."/>
            <person name="Paulsen I.T."/>
            <person name="Peterson J.D."/>
            <person name="White O."/>
            <person name="Nelson W.C."/>
            <person name="Nierman W.C."/>
            <person name="Beanan M.J."/>
            <person name="Brinkac L.M."/>
            <person name="Daugherty S.C."/>
            <person name="Dodson R.J."/>
            <person name="Durkin A.S."/>
            <person name="Madupu R."/>
            <person name="Haft D.H."/>
            <person name="Selengut J."/>
            <person name="Van Aken S.E."/>
            <person name="Khouri H.M."/>
            <person name="Fedorova N."/>
            <person name="Forberger H.A."/>
            <person name="Tran B."/>
            <person name="Kathariou S."/>
            <person name="Wonderling L.D."/>
            <person name="Uhlich G.A."/>
            <person name="Bayles D.O."/>
            <person name="Luchansky J.B."/>
            <person name="Fraser C.M."/>
        </authorList>
    </citation>
    <scope>NUCLEOTIDE SEQUENCE [LARGE SCALE GENOMIC DNA]</scope>
    <source>
        <strain>F2365</strain>
    </source>
</reference>
<name>ADEC_LISMF</name>
<protein>
    <recommendedName>
        <fullName evidence="1">Adenine deaminase</fullName>
        <shortName evidence="1">Adenase</shortName>
        <shortName evidence="1">Adenine aminase</shortName>
        <ecNumber evidence="1">3.5.4.2</ecNumber>
    </recommendedName>
</protein>
<evidence type="ECO:0000255" key="1">
    <source>
        <dbReference type="HAMAP-Rule" id="MF_01518"/>
    </source>
</evidence>
<dbReference type="EC" id="3.5.4.2" evidence="1"/>
<dbReference type="EMBL" id="AE017262">
    <property type="protein sequence ID" value="AAT04538.1"/>
    <property type="molecule type" value="Genomic_DNA"/>
</dbReference>
<dbReference type="SMR" id="Q71YS6"/>
<dbReference type="KEGG" id="lmf:LMOf2365_1767"/>
<dbReference type="HOGENOM" id="CLU_027935_0_0_9"/>
<dbReference type="GO" id="GO:0000034">
    <property type="term" value="F:adenine deaminase activity"/>
    <property type="evidence" value="ECO:0007669"/>
    <property type="project" value="UniProtKB-UniRule"/>
</dbReference>
<dbReference type="GO" id="GO:0006146">
    <property type="term" value="P:adenine catabolic process"/>
    <property type="evidence" value="ECO:0007669"/>
    <property type="project" value="InterPro"/>
</dbReference>
<dbReference type="CDD" id="cd01295">
    <property type="entry name" value="AdeC"/>
    <property type="match status" value="1"/>
</dbReference>
<dbReference type="FunFam" id="3.20.20.140:FF:000016">
    <property type="entry name" value="Adenine deaminase"/>
    <property type="match status" value="1"/>
</dbReference>
<dbReference type="Gene3D" id="3.20.20.140">
    <property type="entry name" value="Metal-dependent hydrolases"/>
    <property type="match status" value="1"/>
</dbReference>
<dbReference type="Gene3D" id="2.30.40.10">
    <property type="entry name" value="Urease, subunit C, domain 1"/>
    <property type="match status" value="1"/>
</dbReference>
<dbReference type="HAMAP" id="MF_01518">
    <property type="entry name" value="Adenine_deamin"/>
    <property type="match status" value="1"/>
</dbReference>
<dbReference type="InterPro" id="IPR006679">
    <property type="entry name" value="Adenine_deam"/>
</dbReference>
<dbReference type="InterPro" id="IPR026912">
    <property type="entry name" value="Adenine_deam_C"/>
</dbReference>
<dbReference type="InterPro" id="IPR006680">
    <property type="entry name" value="Amidohydro-rel"/>
</dbReference>
<dbReference type="InterPro" id="IPR011059">
    <property type="entry name" value="Metal-dep_hydrolase_composite"/>
</dbReference>
<dbReference type="InterPro" id="IPR032466">
    <property type="entry name" value="Metal_Hydrolase"/>
</dbReference>
<dbReference type="NCBIfam" id="TIGR01178">
    <property type="entry name" value="ade"/>
    <property type="match status" value="1"/>
</dbReference>
<dbReference type="PANTHER" id="PTHR11113:SF2">
    <property type="entry name" value="ADENINE DEAMINASE"/>
    <property type="match status" value="1"/>
</dbReference>
<dbReference type="PANTHER" id="PTHR11113">
    <property type="entry name" value="N-ACETYLGLUCOSAMINE-6-PHOSPHATE DEACETYLASE"/>
    <property type="match status" value="1"/>
</dbReference>
<dbReference type="Pfam" id="PF13382">
    <property type="entry name" value="Adenine_deam_C"/>
    <property type="match status" value="1"/>
</dbReference>
<dbReference type="Pfam" id="PF01979">
    <property type="entry name" value="Amidohydro_1"/>
    <property type="match status" value="1"/>
</dbReference>
<dbReference type="SUPFAM" id="SSF51338">
    <property type="entry name" value="Composite domain of metallo-dependent hydrolases"/>
    <property type="match status" value="1"/>
</dbReference>
<dbReference type="SUPFAM" id="SSF51556">
    <property type="entry name" value="Metallo-dependent hydrolases"/>
    <property type="match status" value="1"/>
</dbReference>
<sequence>MENLEQLQERVAVSDGRAKADLVIKNGRIINVFSGEIMDGDIAIKNGYIAGIGNFPDAEKIIDAAGAFIAPGFIDAHVHVESAMVTPAEFARVLLPNGVTTIVTDPHEIANVAGEKGIEFMLEDAKGVPIDMFVMLPSSVPATEGEHNGETLHAEKLHPLYRHEKVIGLAEVMDFPSVAKGSSDILTKIIDAKKEGGRIDGHGAGLTSADLNNYLAVGIRTDHESTTAKEATDRLRAGMFVMLREGTVGRDLLQTIPAVSEKNSHRFCFCTDDKLINDLITEGSINYNIRLAIKNGIDPITAIQMATINAANCHNLPYLGAVAAGYQADIVFLTDIETVEISKVLKNGEVVVDNGVRHEAAFKQQAAVPFVSPPINHHVSLQDLALPLTKETCYVIGMQPNSLFTEKRIEQVAIQDGKFVPTVENDLLKMAVVERHHDTGCVGLGIVKGFGLTEGAIATTVAHDSHNIVAVGISDEAMKAAIDHITQTGGGIAVVNGAGQVLHDLALPIAGLLSDKSYEEVENDLAGLLNAFKQISTADGFDPFLTLSFLTLPVIPELKLTDQGLFDFATFQIISNEVN</sequence>
<accession>Q71YS6</accession>
<feature type="chain" id="PRO_0000142428" description="Adenine deaminase">
    <location>
        <begin position="1"/>
        <end position="579"/>
    </location>
</feature>
<proteinExistence type="inferred from homology"/>
<gene>
    <name evidence="1" type="primary">ade</name>
    <name type="ordered locus">LMOf2365_1767</name>
</gene>
<comment type="catalytic activity">
    <reaction evidence="1">
        <text>adenine + H2O + H(+) = hypoxanthine + NH4(+)</text>
        <dbReference type="Rhea" id="RHEA:23688"/>
        <dbReference type="ChEBI" id="CHEBI:15377"/>
        <dbReference type="ChEBI" id="CHEBI:15378"/>
        <dbReference type="ChEBI" id="CHEBI:16708"/>
        <dbReference type="ChEBI" id="CHEBI:17368"/>
        <dbReference type="ChEBI" id="CHEBI:28938"/>
        <dbReference type="EC" id="3.5.4.2"/>
    </reaction>
</comment>
<comment type="cofactor">
    <cofactor evidence="1">
        <name>Mn(2+)</name>
        <dbReference type="ChEBI" id="CHEBI:29035"/>
    </cofactor>
</comment>
<comment type="similarity">
    <text evidence="1">Belongs to the metallo-dependent hydrolases superfamily. Adenine deaminase family.</text>
</comment>